<keyword id="KW-0963">Cytoplasm</keyword>
<keyword id="KW-0653">Protein transport</keyword>
<keyword id="KW-1185">Reference proteome</keyword>
<keyword id="KW-0677">Repeat</keyword>
<keyword id="KW-0802">TPR repeat</keyword>
<keyword id="KW-0813">Transport</keyword>
<proteinExistence type="inferred from homology"/>
<feature type="chain" id="PRO_0000314772" description="Vacuolar protein sorting-associated protein 3">
    <location>
        <begin position="1"/>
        <end position="910"/>
    </location>
</feature>
<feature type="domain" description="CNH" evidence="2">
    <location>
        <begin position="16"/>
        <end position="288"/>
    </location>
</feature>
<feature type="repeat" description="TPR 1">
    <location>
        <begin position="69"/>
        <end position="101"/>
    </location>
</feature>
<feature type="repeat" description="TPR 2">
    <location>
        <begin position="383"/>
        <end position="416"/>
    </location>
</feature>
<feature type="repeat" description="TPR 3">
    <location>
        <begin position="554"/>
        <end position="587"/>
    </location>
</feature>
<feature type="repeat" description="TPR 4">
    <location>
        <begin position="674"/>
        <end position="710"/>
    </location>
</feature>
<feature type="repeat" description="TPR 5">
    <location>
        <begin position="712"/>
        <end position="743"/>
    </location>
</feature>
<feature type="repeat" description="TPR 6">
    <location>
        <begin position="763"/>
        <end position="797"/>
    </location>
</feature>
<evidence type="ECO:0000250" key="1"/>
<evidence type="ECO:0000255" key="2">
    <source>
        <dbReference type="PROSITE-ProRule" id="PRU00795"/>
    </source>
</evidence>
<evidence type="ECO:0000305" key="3"/>
<comment type="function">
    <text evidence="1">Required for sorting and processing of soluble vacuolar proteins.</text>
</comment>
<comment type="subcellular location">
    <subcellularLocation>
        <location evidence="1">Cytoplasm</location>
    </subcellularLocation>
</comment>
<comment type="similarity">
    <text evidence="3">Belongs to the VPS3 family.</text>
</comment>
<accession>O59796</accession>
<gene>
    <name type="primary">vps3</name>
    <name type="ORF">SPCC364.05</name>
</gene>
<reference key="1">
    <citation type="journal article" date="2002" name="Nature">
        <title>The genome sequence of Schizosaccharomyces pombe.</title>
        <authorList>
            <person name="Wood V."/>
            <person name="Gwilliam R."/>
            <person name="Rajandream M.A."/>
            <person name="Lyne M.H."/>
            <person name="Lyne R."/>
            <person name="Stewart A."/>
            <person name="Sgouros J.G."/>
            <person name="Peat N."/>
            <person name="Hayles J."/>
            <person name="Baker S.G."/>
            <person name="Basham D."/>
            <person name="Bowman S."/>
            <person name="Brooks K."/>
            <person name="Brown D."/>
            <person name="Brown S."/>
            <person name="Chillingworth T."/>
            <person name="Churcher C.M."/>
            <person name="Collins M."/>
            <person name="Connor R."/>
            <person name="Cronin A."/>
            <person name="Davis P."/>
            <person name="Feltwell T."/>
            <person name="Fraser A."/>
            <person name="Gentles S."/>
            <person name="Goble A."/>
            <person name="Hamlin N."/>
            <person name="Harris D.E."/>
            <person name="Hidalgo J."/>
            <person name="Hodgson G."/>
            <person name="Holroyd S."/>
            <person name="Hornsby T."/>
            <person name="Howarth S."/>
            <person name="Huckle E.J."/>
            <person name="Hunt S."/>
            <person name="Jagels K."/>
            <person name="James K.D."/>
            <person name="Jones L."/>
            <person name="Jones M."/>
            <person name="Leather S."/>
            <person name="McDonald S."/>
            <person name="McLean J."/>
            <person name="Mooney P."/>
            <person name="Moule S."/>
            <person name="Mungall K.L."/>
            <person name="Murphy L.D."/>
            <person name="Niblett D."/>
            <person name="Odell C."/>
            <person name="Oliver K."/>
            <person name="O'Neil S."/>
            <person name="Pearson D."/>
            <person name="Quail M.A."/>
            <person name="Rabbinowitsch E."/>
            <person name="Rutherford K.M."/>
            <person name="Rutter S."/>
            <person name="Saunders D."/>
            <person name="Seeger K."/>
            <person name="Sharp S."/>
            <person name="Skelton J."/>
            <person name="Simmonds M.N."/>
            <person name="Squares R."/>
            <person name="Squares S."/>
            <person name="Stevens K."/>
            <person name="Taylor K."/>
            <person name="Taylor R.G."/>
            <person name="Tivey A."/>
            <person name="Walsh S.V."/>
            <person name="Warren T."/>
            <person name="Whitehead S."/>
            <person name="Woodward J.R."/>
            <person name="Volckaert G."/>
            <person name="Aert R."/>
            <person name="Robben J."/>
            <person name="Grymonprez B."/>
            <person name="Weltjens I."/>
            <person name="Vanstreels E."/>
            <person name="Rieger M."/>
            <person name="Schaefer M."/>
            <person name="Mueller-Auer S."/>
            <person name="Gabel C."/>
            <person name="Fuchs M."/>
            <person name="Duesterhoeft A."/>
            <person name="Fritzc C."/>
            <person name="Holzer E."/>
            <person name="Moestl D."/>
            <person name="Hilbert H."/>
            <person name="Borzym K."/>
            <person name="Langer I."/>
            <person name="Beck A."/>
            <person name="Lehrach H."/>
            <person name="Reinhardt R."/>
            <person name="Pohl T.M."/>
            <person name="Eger P."/>
            <person name="Zimmermann W."/>
            <person name="Wedler H."/>
            <person name="Wambutt R."/>
            <person name="Purnelle B."/>
            <person name="Goffeau A."/>
            <person name="Cadieu E."/>
            <person name="Dreano S."/>
            <person name="Gloux S."/>
            <person name="Lelaure V."/>
            <person name="Mottier S."/>
            <person name="Galibert F."/>
            <person name="Aves S.J."/>
            <person name="Xiang Z."/>
            <person name="Hunt C."/>
            <person name="Moore K."/>
            <person name="Hurst S.M."/>
            <person name="Lucas M."/>
            <person name="Rochet M."/>
            <person name="Gaillardin C."/>
            <person name="Tallada V.A."/>
            <person name="Garzon A."/>
            <person name="Thode G."/>
            <person name="Daga R.R."/>
            <person name="Cruzado L."/>
            <person name="Jimenez J."/>
            <person name="Sanchez M."/>
            <person name="del Rey F."/>
            <person name="Benito J."/>
            <person name="Dominguez A."/>
            <person name="Revuelta J.L."/>
            <person name="Moreno S."/>
            <person name="Armstrong J."/>
            <person name="Forsburg S.L."/>
            <person name="Cerutti L."/>
            <person name="Lowe T."/>
            <person name="McCombie W.R."/>
            <person name="Paulsen I."/>
            <person name="Potashkin J."/>
            <person name="Shpakovski G.V."/>
            <person name="Ussery D."/>
            <person name="Barrell B.G."/>
            <person name="Nurse P."/>
        </authorList>
    </citation>
    <scope>NUCLEOTIDE SEQUENCE [LARGE SCALE GENOMIC DNA]</scope>
    <source>
        <strain>972 / ATCC 24843</strain>
    </source>
</reference>
<dbReference type="EMBL" id="CU329672">
    <property type="protein sequence ID" value="CAA18287.1"/>
    <property type="molecule type" value="Genomic_DNA"/>
</dbReference>
<dbReference type="PIR" id="T41331">
    <property type="entry name" value="T41331"/>
</dbReference>
<dbReference type="RefSeq" id="NP_587839.1">
    <property type="nucleotide sequence ID" value="NM_001022832.2"/>
</dbReference>
<dbReference type="BioGRID" id="276081">
    <property type="interactions" value="62"/>
</dbReference>
<dbReference type="FunCoup" id="O59796">
    <property type="interactions" value="73"/>
</dbReference>
<dbReference type="STRING" id="284812.O59796"/>
<dbReference type="PaxDb" id="4896-SPCC364.05.1"/>
<dbReference type="EnsemblFungi" id="SPCC364.05.1">
    <property type="protein sequence ID" value="SPCC364.05.1:pep"/>
    <property type="gene ID" value="SPCC364.05"/>
</dbReference>
<dbReference type="GeneID" id="2539519"/>
<dbReference type="KEGG" id="spo:2539519"/>
<dbReference type="PomBase" id="SPCC364.05">
    <property type="gene designation" value="vps3"/>
</dbReference>
<dbReference type="VEuPathDB" id="FungiDB:SPCC364.05"/>
<dbReference type="eggNOG" id="KOG2063">
    <property type="taxonomic scope" value="Eukaryota"/>
</dbReference>
<dbReference type="HOGENOM" id="CLU_314265_0_0_1"/>
<dbReference type="InParanoid" id="O59796"/>
<dbReference type="OMA" id="NAYIMLM"/>
<dbReference type="PhylomeDB" id="O59796"/>
<dbReference type="PRO" id="PR:O59796"/>
<dbReference type="Proteomes" id="UP000002485">
    <property type="component" value="Chromosome III"/>
</dbReference>
<dbReference type="GO" id="GO:0033263">
    <property type="term" value="C:CORVET complex"/>
    <property type="evidence" value="ECO:0000266"/>
    <property type="project" value="PomBase"/>
</dbReference>
<dbReference type="GO" id="GO:0005737">
    <property type="term" value="C:cytoplasm"/>
    <property type="evidence" value="ECO:0000318"/>
    <property type="project" value="GO_Central"/>
</dbReference>
<dbReference type="GO" id="GO:0005829">
    <property type="term" value="C:cytosol"/>
    <property type="evidence" value="ECO:0007005"/>
    <property type="project" value="PomBase"/>
</dbReference>
<dbReference type="GO" id="GO:0016020">
    <property type="term" value="C:membrane"/>
    <property type="evidence" value="ECO:0000318"/>
    <property type="project" value="GO_Central"/>
</dbReference>
<dbReference type="GO" id="GO:0005634">
    <property type="term" value="C:nucleus"/>
    <property type="evidence" value="ECO:0007005"/>
    <property type="project" value="PomBase"/>
</dbReference>
<dbReference type="GO" id="GO:0006914">
    <property type="term" value="P:autophagy"/>
    <property type="evidence" value="ECO:0000318"/>
    <property type="project" value="GO_Central"/>
</dbReference>
<dbReference type="GO" id="GO:0034058">
    <property type="term" value="P:endosomal vesicle fusion"/>
    <property type="evidence" value="ECO:0000318"/>
    <property type="project" value="GO_Central"/>
</dbReference>
<dbReference type="GO" id="GO:0006886">
    <property type="term" value="P:intracellular protein transport"/>
    <property type="evidence" value="ECO:0000305"/>
    <property type="project" value="PomBase"/>
</dbReference>
<dbReference type="GO" id="GO:0045324">
    <property type="term" value="P:late endosome to vacuole transport"/>
    <property type="evidence" value="ECO:0000305"/>
    <property type="project" value="PomBase"/>
</dbReference>
<dbReference type="InterPro" id="IPR001180">
    <property type="entry name" value="CNH_dom"/>
</dbReference>
<dbReference type="InterPro" id="IPR032914">
    <property type="entry name" value="Vam6/VPS39/TRAP1"/>
</dbReference>
<dbReference type="InterPro" id="IPR036322">
    <property type="entry name" value="WD40_repeat_dom_sf"/>
</dbReference>
<dbReference type="PANTHER" id="PTHR12894">
    <property type="entry name" value="CNH DOMAIN CONTAINING"/>
    <property type="match status" value="1"/>
</dbReference>
<dbReference type="PANTHER" id="PTHR12894:SF27">
    <property type="entry name" value="TRANSFORMING GROWTH FACTOR-BETA RECEPTOR-ASSOCIATED PROTEIN 1"/>
    <property type="match status" value="1"/>
</dbReference>
<dbReference type="Pfam" id="PF00780">
    <property type="entry name" value="CNH"/>
    <property type="match status" value="1"/>
</dbReference>
<dbReference type="SUPFAM" id="SSF50978">
    <property type="entry name" value="WD40 repeat-like"/>
    <property type="match status" value="1"/>
</dbReference>
<dbReference type="PROSITE" id="PS50219">
    <property type="entry name" value="CNH"/>
    <property type="match status" value="1"/>
</dbReference>
<sequence length="910" mass="104581">MSDIELHESAIPKELDSPVTTIALYNNHLYFGTEGGDVFLYNFSNFQLNESPELVKKISLVSKSRVNRILAMPFLGAVFIHHGSFAEVYKEDDLTQLYPSISFKGLVEFCHPGQRIDEKSTYLIVTNTHLKLISFQKDGIILVKNELKYPNIQTARVNGHIVCLVTENSFELLDILTFDTTPLFPIIKYDSENNGLMYKPMIVLHSNEFLLITGSPKDAIGLFVDSQGNVTRSTLTFSFYPKHVFSTSHYVFAISSSSLQIIDINTLSLVKSINLKDDESFSFISRLTSVHFCDRQIFSKFSAVNTASTSKTSDTIERASFSKPSFIFLTNKSWGFGAEAHFMNKLEFSITIGDIEAPLRRVSKRLRNPKKYGITNDVAYLQSAYLEQISALQYWKQGQYENSLSLLETSKIDPRVVISLYPDLYHSELSYIAFQGVISFRKSILSVDDTVANVLKSNELFRDTDQYTQRQMIEITKENAYIMLMRYLKNYKKNTSISEYLLSSQRDVMLAVEHSLLLLYLNMDDLAAGTKNAKELLESGLTGVEDIKDVLIQKKEYYLLSVLLATVRDHDGVLQTWKKLITGDYEDRRFNDGLIKIREYLVNDIEPSTFWEFTTWLCKHDATEGTRVLLDKTVSGSISAEDVLEHLDSSQDDVLIDYLVKSNSVTHRALLLKLCVNKLLGSLLDHNDFKNRLETAIETFRELPCMEKPTYAQYLEQLWGDMSDFSTHLSFYYLCSINLMENVEEESIDKIKDILFDIHVDNLYLFPQLEHSFYKRKKNYEKALSVLVTNIHDYKGGEAYCLQIDDVYPQCWCNLLEKCISTGDGCSDFIKELLYRRPFSYTLSYVCEQIPDHWNLNLLADFLCILQKRNAERLNESQTRLTLEKSLSQNLEELFMAINRRNVALGKNEI</sequence>
<name>VPS3_SCHPO</name>
<organism>
    <name type="scientific">Schizosaccharomyces pombe (strain 972 / ATCC 24843)</name>
    <name type="common">Fission yeast</name>
    <dbReference type="NCBI Taxonomy" id="284812"/>
    <lineage>
        <taxon>Eukaryota</taxon>
        <taxon>Fungi</taxon>
        <taxon>Dikarya</taxon>
        <taxon>Ascomycota</taxon>
        <taxon>Taphrinomycotina</taxon>
        <taxon>Schizosaccharomycetes</taxon>
        <taxon>Schizosaccharomycetales</taxon>
        <taxon>Schizosaccharomycetaceae</taxon>
        <taxon>Schizosaccharomyces</taxon>
    </lineage>
</organism>
<protein>
    <recommendedName>
        <fullName>Vacuolar protein sorting-associated protein 3</fullName>
    </recommendedName>
</protein>